<gene>
    <name type="primary">Segment-6</name>
    <name type="synonym">M6</name>
</gene>
<sequence length="505" mass="56780">MGKFTSFLKRAGNATKRALTSDSAKKMYKLAGKTLQRVVESEVGSAAIDGVMQGAIQSIIQGENLGDSIKQAVILNVAGTLESAPDPLSPGEQLLYNKVSEIEKMEKEDRVIETHNAKIEEKFGKDLLAIRKIVKGEVDAEKLEGNEIKYVEKALSGLLEIGKDQSERITKLYRALQTEEDLRTRDETRMINEYREKFDALKEAIEIEQQATHDEAIQEMLDLSAEVIETASEEVPIFGAGAANVIATTRAIQGGLKLKEIVDKLTGIDLSHLKVADIHPHIIEKAMLRDTVTDKDLAMAIKSKVDVIDEMNVETQHVIDAVLPIVKQEYEKHDNKYHVRIPGALKIHSEHTPKIHIYTTPWDSDSVFMCRAIAPHHQQRSFFIGFDLEIEYVHFEDTSVEGHILHGGAITVEGRGFRQAYTEFMNAAWGMPTTPELHKRKLQRSMGTHPIYMGSMDYAISYEQLVSNAMRLVYDSELQMHCLRGPLKFQRRTLMNALLYGVKIA</sequence>
<proteinExistence type="inferred from homology"/>
<evidence type="ECO:0000250" key="1"/>
<evidence type="ECO:0000305" key="2"/>
<organism>
    <name type="scientific">African horse sickness virus</name>
    <name type="common">AHSV</name>
    <name type="synonym">Orbivirus alphaequi</name>
    <dbReference type="NCBI Taxonomy" id="40050"/>
    <lineage>
        <taxon>Viruses</taxon>
        <taxon>Riboviria</taxon>
        <taxon>Orthornavirae</taxon>
        <taxon>Duplornaviricota</taxon>
        <taxon>Resentoviricetes</taxon>
        <taxon>Reovirales</taxon>
        <taxon>Sedoreoviridae</taxon>
        <taxon>Orbivirus</taxon>
    </lineage>
</organism>
<dbReference type="EMBL" id="M94682">
    <property type="protein sequence ID" value="AAA42539.1"/>
    <property type="molecule type" value="Genomic_RNA"/>
</dbReference>
<dbReference type="EMBL" id="M94731">
    <property type="protein sequence ID" value="AAA92778.1"/>
    <property type="molecule type" value="Genomic_RNA"/>
</dbReference>
<dbReference type="EMBL" id="D26571">
    <property type="protein sequence ID" value="BAA05620.1"/>
    <property type="molecule type" value="Genomic_RNA"/>
</dbReference>
<dbReference type="PIR" id="A44053">
    <property type="entry name" value="P5XRA4"/>
</dbReference>
<dbReference type="RefSeq" id="YP_052963.1">
    <property type="nucleotide sequence ID" value="NC_006018.1"/>
</dbReference>
<dbReference type="SMR" id="Q02168"/>
<dbReference type="GeneID" id="2930878"/>
<dbReference type="KEGG" id="vg:2930878"/>
<dbReference type="Proteomes" id="UP000201896">
    <property type="component" value="Genome"/>
</dbReference>
<dbReference type="GO" id="GO:0039624">
    <property type="term" value="C:viral outer capsid"/>
    <property type="evidence" value="ECO:0007669"/>
    <property type="project" value="UniProtKB-KW"/>
</dbReference>
<dbReference type="GO" id="GO:0005198">
    <property type="term" value="F:structural molecule activity"/>
    <property type="evidence" value="ECO:0007669"/>
    <property type="project" value="InterPro"/>
</dbReference>
<dbReference type="GO" id="GO:0140267">
    <property type="term" value="P:symbiont entry into host cell via permeabilization of host membrane"/>
    <property type="evidence" value="ECO:0007669"/>
    <property type="project" value="UniProtKB-KW"/>
</dbReference>
<dbReference type="InterPro" id="IPR000145">
    <property type="entry name" value="Capsid_VP5_Orbivir"/>
</dbReference>
<dbReference type="Pfam" id="PF00901">
    <property type="entry name" value="Orbi_VP5"/>
    <property type="match status" value="1"/>
</dbReference>
<accession>Q02168</accession>
<accession>Q64926</accession>
<reference key="1">
    <citation type="journal article" date="1992" name="Virology">
        <title>Evolutionary relationships among the gnat-transmitted orbiviruses that cause African horse sickness, bluetongue, and epizootic hemorrhagic disease as evidenced by their capsid protein sequences.</title>
        <authorList>
            <person name="Iwata H."/>
            <person name="Yamagawa M."/>
            <person name="Roy P."/>
        </authorList>
    </citation>
    <scope>NUCLEOTIDE SEQUENCE [GENOMIC RNA]</scope>
    <source>
        <strain>Serotype 4</strain>
    </source>
</reference>
<reference key="2">
    <citation type="submission" date="1996-03" db="EMBL/GenBank/DDBJ databases">
        <authorList>
            <person name="Iwata H."/>
            <person name="Yamagawa M."/>
            <person name="Roy P."/>
        </authorList>
    </citation>
    <scope>NUCLEOTIDE SEQUENCE [GENOMIC RNA]</scope>
    <source>
        <strain>Serotype 4</strain>
    </source>
</reference>
<reference key="3">
    <citation type="journal article" date="1994" name="J. Vet. Med. Sci.">
        <title>The complete sequences of African horsesickness virus serotype 4 (vaccine strain) RNA segment 2 and 6 which encode outer capsid protein.</title>
        <authorList>
            <person name="Sakamoto K."/>
            <person name="Mizukoshi N."/>
            <person name="Apiwatnakorn B."/>
            <person name="Iwata A."/>
            <person name="Tsuchiya T."/>
            <person name="Ueda S."/>
            <person name="Imagawa H."/>
            <person name="Sugiura T."/>
            <person name="Kamada M."/>
            <person name="Fukusho A."/>
        </authorList>
    </citation>
    <scope>NUCLEOTIDE SEQUENCE [GENOMIC RNA]</scope>
    <source>
        <strain>Vaccine</strain>
    </source>
</reference>
<keyword id="KW-0167">Capsid protein</keyword>
<keyword id="KW-1152">Outer capsid protein</keyword>
<keyword id="KW-1162">Viral penetration into host cytoplasm</keyword>
<keyword id="KW-1173">Viral penetration via permeabilization of host membrane</keyword>
<keyword id="KW-0946">Virion</keyword>
<keyword id="KW-1160">Virus entry into host cell</keyword>
<comment type="function">
    <text evidence="1">VP5 protein is one of the two proteins (with VP2) which constitute the virus particle outer capsid. Acts as a membrane permeabilization protein that mediates release of viral particles from endosomal compartments into the cytoplasm. Permeabilization activity is probably negatively regulated by VP2 and is triggered by endosomal degradation of VP2 and exposure to low pH (By similarity).</text>
</comment>
<comment type="subcellular location">
    <subcellularLocation>
        <location evidence="2">Virion</location>
    </subcellularLocation>
</comment>
<comment type="similarity">
    <text evidence="2">Belongs to the orbivirus VP5 family.</text>
</comment>
<feature type="chain" id="PRO_0000222716" description="Outer capsid protein VP5">
    <location>
        <begin position="1"/>
        <end position="505"/>
    </location>
</feature>
<feature type="region of interest" description="Involved in membrane permeabilization" evidence="1">
    <location>
        <begin position="1"/>
        <end position="42"/>
    </location>
</feature>
<feature type="sequence conflict" description="In Ref. 2; BAA05620." evidence="2" ref="2">
    <original>N</original>
    <variation>S</variation>
    <location>
        <position position="13"/>
    </location>
</feature>
<feature type="sequence conflict" description="In Ref. 2; BAA05620." evidence="2" ref="2">
    <original>R</original>
    <variation>K</variation>
    <location>
        <position position="17"/>
    </location>
</feature>
<feature type="sequence conflict" description="In Ref. 2; BAA05620." evidence="2" ref="2">
    <original>Y</original>
    <variation>H</variation>
    <location>
        <position position="28"/>
    </location>
</feature>
<feature type="sequence conflict" description="In Ref. 2; BAA05620." evidence="2" ref="2">
    <original>A</original>
    <variation>P</variation>
    <location>
        <position position="46"/>
    </location>
</feature>
<feature type="sequence conflict" description="In Ref. 2; BAA05620." evidence="2" ref="2">
    <original>R</original>
    <variation>K</variation>
    <location>
        <position position="444"/>
    </location>
</feature>
<feature type="sequence conflict" description="In Ref. 2; BAA05620." evidence="2" ref="2">
    <original>G</original>
    <variation>R</variation>
    <location>
        <position position="501"/>
    </location>
</feature>
<protein>
    <recommendedName>
        <fullName>Outer capsid protein VP5</fullName>
    </recommendedName>
</protein>
<name>VP5_AHSV</name>